<accession>B5YY27</accession>
<reference key="1">
    <citation type="journal article" date="2011" name="Proc. Natl. Acad. Sci. U.S.A.">
        <title>Genomic anatomy of Escherichia coli O157:H7 outbreaks.</title>
        <authorList>
            <person name="Eppinger M."/>
            <person name="Mammel M.K."/>
            <person name="Leclerc J.E."/>
            <person name="Ravel J."/>
            <person name="Cebula T.A."/>
        </authorList>
    </citation>
    <scope>NUCLEOTIDE SEQUENCE [LARGE SCALE GENOMIC DNA]</scope>
    <source>
        <strain>EC4115 / EHEC</strain>
    </source>
</reference>
<gene>
    <name evidence="1" type="primary">gppA</name>
    <name type="ordered locus">ECH74115_5212</name>
</gene>
<evidence type="ECO:0000255" key="1">
    <source>
        <dbReference type="HAMAP-Rule" id="MF_01550"/>
    </source>
</evidence>
<protein>
    <recommendedName>
        <fullName evidence="1">Guanosine-5'-triphosphate,3'-diphosphate pyrophosphatase</fullName>
        <ecNumber evidence="1">3.6.1.40</ecNumber>
    </recommendedName>
    <alternativeName>
        <fullName evidence="1">Guanosine pentaphosphate phosphohydrolase</fullName>
    </alternativeName>
    <alternativeName>
        <fullName evidence="1">pppGpp-5'-phosphohydrolase</fullName>
    </alternativeName>
</protein>
<dbReference type="EC" id="3.6.1.40" evidence="1"/>
<dbReference type="EMBL" id="CP001164">
    <property type="protein sequence ID" value="ACI36624.1"/>
    <property type="molecule type" value="Genomic_DNA"/>
</dbReference>
<dbReference type="RefSeq" id="WP_001295254.1">
    <property type="nucleotide sequence ID" value="NC_011353.1"/>
</dbReference>
<dbReference type="SMR" id="B5YY27"/>
<dbReference type="GeneID" id="75174011"/>
<dbReference type="KEGG" id="ecf:ECH74115_5212"/>
<dbReference type="HOGENOM" id="CLU_025908_4_0_6"/>
<dbReference type="UniPathway" id="UPA00908">
    <property type="reaction ID" value="UER00885"/>
</dbReference>
<dbReference type="GO" id="GO:0008894">
    <property type="term" value="F:guanosine-5'-triphosphate,3'-diphosphate diphosphatase activity"/>
    <property type="evidence" value="ECO:0007669"/>
    <property type="project" value="UniProtKB-UniRule"/>
</dbReference>
<dbReference type="GO" id="GO:0015974">
    <property type="term" value="P:guanosine pentaphosphate catabolic process"/>
    <property type="evidence" value="ECO:0007669"/>
    <property type="project" value="InterPro"/>
</dbReference>
<dbReference type="GO" id="GO:0015970">
    <property type="term" value="P:guanosine tetraphosphate biosynthetic process"/>
    <property type="evidence" value="ECO:0007669"/>
    <property type="project" value="UniProtKB-UniRule"/>
</dbReference>
<dbReference type="GO" id="GO:0015949">
    <property type="term" value="P:nucleobase-containing small molecule interconversion"/>
    <property type="evidence" value="ECO:0007669"/>
    <property type="project" value="TreeGrafter"/>
</dbReference>
<dbReference type="CDD" id="cd24117">
    <property type="entry name" value="ASKHA_NBD_EcGppA-like"/>
    <property type="match status" value="1"/>
</dbReference>
<dbReference type="FunFam" id="1.10.3210.10:FF:000004">
    <property type="entry name" value="Guanosine-5'-triphosphate,3'-diphosphate pyrophosphatase"/>
    <property type="match status" value="1"/>
</dbReference>
<dbReference type="FunFam" id="3.30.420.150:FF:000001">
    <property type="entry name" value="Guanosine-5'-triphosphate,3'-diphosphate pyrophosphatase"/>
    <property type="match status" value="1"/>
</dbReference>
<dbReference type="FunFam" id="3.30.420.40:FF:000023">
    <property type="entry name" value="Guanosine-5'-triphosphate,3'-diphosphate pyrophosphatase"/>
    <property type="match status" value="1"/>
</dbReference>
<dbReference type="Gene3D" id="3.30.420.40">
    <property type="match status" value="1"/>
</dbReference>
<dbReference type="Gene3D" id="3.30.420.150">
    <property type="entry name" value="Exopolyphosphatase. Domain 2"/>
    <property type="match status" value="1"/>
</dbReference>
<dbReference type="Gene3D" id="1.10.3210.10">
    <property type="entry name" value="Hypothetical protein af1432"/>
    <property type="match status" value="1"/>
</dbReference>
<dbReference type="HAMAP" id="MF_01550">
    <property type="entry name" value="GppA"/>
    <property type="match status" value="1"/>
</dbReference>
<dbReference type="InterPro" id="IPR043129">
    <property type="entry name" value="ATPase_NBD"/>
</dbReference>
<dbReference type="InterPro" id="IPR050273">
    <property type="entry name" value="GppA/Ppx_hydrolase"/>
</dbReference>
<dbReference type="InterPro" id="IPR023709">
    <property type="entry name" value="Guo-5TP_3DP_PyrP"/>
</dbReference>
<dbReference type="InterPro" id="IPR048950">
    <property type="entry name" value="Ppx_GppA_C"/>
</dbReference>
<dbReference type="InterPro" id="IPR003695">
    <property type="entry name" value="Ppx_GppA_N"/>
</dbReference>
<dbReference type="InterPro" id="IPR030673">
    <property type="entry name" value="PyroPPase_GppA_Ppx"/>
</dbReference>
<dbReference type="NCBIfam" id="NF008260">
    <property type="entry name" value="PRK11031.1"/>
    <property type="match status" value="1"/>
</dbReference>
<dbReference type="PANTHER" id="PTHR30005">
    <property type="entry name" value="EXOPOLYPHOSPHATASE"/>
    <property type="match status" value="1"/>
</dbReference>
<dbReference type="PANTHER" id="PTHR30005:SF0">
    <property type="entry name" value="RETROGRADE REGULATION PROTEIN 2"/>
    <property type="match status" value="1"/>
</dbReference>
<dbReference type="Pfam" id="PF02541">
    <property type="entry name" value="Ppx-GppA"/>
    <property type="match status" value="1"/>
</dbReference>
<dbReference type="Pfam" id="PF21447">
    <property type="entry name" value="Ppx-GppA_III"/>
    <property type="match status" value="1"/>
</dbReference>
<dbReference type="PIRSF" id="PIRSF001267">
    <property type="entry name" value="Pyrophosphatase_GppA_Ppx"/>
    <property type="match status" value="1"/>
</dbReference>
<dbReference type="SUPFAM" id="SSF53067">
    <property type="entry name" value="Actin-like ATPase domain"/>
    <property type="match status" value="2"/>
</dbReference>
<dbReference type="SUPFAM" id="SSF109604">
    <property type="entry name" value="HD-domain/PDEase-like"/>
    <property type="match status" value="1"/>
</dbReference>
<sequence>MGSTSSLYAAIDLGSNSFHMLVVREVAGSIQTLTRIKRKVRLAAGLNSENALSNEAMERGWQCLRLFAERLQDIPPSQIRVVATATLRLAVNAGDFIAKAQEILGCPVQVISGEEEARLIYQGVAHTTGGADQRLVVDIGGASTELVTGTGAQTTSLFSLSMGCVTWLERYFADRNLGQENFDAAEKAAREVLRPVADELRYHGWKVCVGASGTVQALQEIMMAQGMDERITLEKLQQLKQRAIHCGRLEELEIDGLTLERALVFPSGLAILIAIFTELNIQCMTLAGGALREGLVYGMLHLAVEQDIRSRTLRNIQRRFMIDIDQAQRVAKVAANFFDQVENEWHLEAISRDLLISACQLHEIGLSVDFKQAPQHAAYLVRNLDLPGFTPAQKKLLATLLLNQTNPVDLSSLHQQNAVPPRVAEQLCRLLRLAIIFASRRRDDLVPEMTLQANHELLTLTLPQGWLTQHPLGKEIIAQESQWQSYVHWPLEVH</sequence>
<keyword id="KW-0378">Hydrolase</keyword>
<proteinExistence type="inferred from homology"/>
<name>GPPA_ECO5E</name>
<comment type="function">
    <text evidence="1">Catalyzes the conversion of pppGpp to ppGpp. Guanosine pentaphosphate (pppGpp) is a cytoplasmic signaling molecule which together with ppGpp controls the 'stringent response', an adaptive process that allows bacteria to respond to amino acid starvation, resulting in the coordinated regulation of numerous cellular activities.</text>
</comment>
<comment type="catalytic activity">
    <reaction evidence="1">
        <text>guanosine 3'-diphosphate 5'-triphosphate + H2O = guanosine 3',5'-bis(diphosphate) + phosphate + H(+)</text>
        <dbReference type="Rhea" id="RHEA:13073"/>
        <dbReference type="ChEBI" id="CHEBI:15377"/>
        <dbReference type="ChEBI" id="CHEBI:15378"/>
        <dbReference type="ChEBI" id="CHEBI:43474"/>
        <dbReference type="ChEBI" id="CHEBI:77828"/>
        <dbReference type="ChEBI" id="CHEBI:142410"/>
        <dbReference type="EC" id="3.6.1.40"/>
    </reaction>
</comment>
<comment type="pathway">
    <text evidence="1">Purine metabolism; ppGpp biosynthesis; ppGpp from GTP: step 2/2.</text>
</comment>
<comment type="similarity">
    <text evidence="1">Belongs to the GppA/Ppx family. GppA subfamily.</text>
</comment>
<feature type="chain" id="PRO_1000146865" description="Guanosine-5'-triphosphate,3'-diphosphate pyrophosphatase">
    <location>
        <begin position="1"/>
        <end position="494"/>
    </location>
</feature>
<organism>
    <name type="scientific">Escherichia coli O157:H7 (strain EC4115 / EHEC)</name>
    <dbReference type="NCBI Taxonomy" id="444450"/>
    <lineage>
        <taxon>Bacteria</taxon>
        <taxon>Pseudomonadati</taxon>
        <taxon>Pseudomonadota</taxon>
        <taxon>Gammaproteobacteria</taxon>
        <taxon>Enterobacterales</taxon>
        <taxon>Enterobacteriaceae</taxon>
        <taxon>Escherichia</taxon>
    </lineage>
</organism>